<reference key="1">
    <citation type="journal article" date="2002" name="Nature">
        <title>The genome sequence of Schizosaccharomyces pombe.</title>
        <authorList>
            <person name="Wood V."/>
            <person name="Gwilliam R."/>
            <person name="Rajandream M.A."/>
            <person name="Lyne M.H."/>
            <person name="Lyne R."/>
            <person name="Stewart A."/>
            <person name="Sgouros J.G."/>
            <person name="Peat N."/>
            <person name="Hayles J."/>
            <person name="Baker S.G."/>
            <person name="Basham D."/>
            <person name="Bowman S."/>
            <person name="Brooks K."/>
            <person name="Brown D."/>
            <person name="Brown S."/>
            <person name="Chillingworth T."/>
            <person name="Churcher C.M."/>
            <person name="Collins M."/>
            <person name="Connor R."/>
            <person name="Cronin A."/>
            <person name="Davis P."/>
            <person name="Feltwell T."/>
            <person name="Fraser A."/>
            <person name="Gentles S."/>
            <person name="Goble A."/>
            <person name="Hamlin N."/>
            <person name="Harris D.E."/>
            <person name="Hidalgo J."/>
            <person name="Hodgson G."/>
            <person name="Holroyd S."/>
            <person name="Hornsby T."/>
            <person name="Howarth S."/>
            <person name="Huckle E.J."/>
            <person name="Hunt S."/>
            <person name="Jagels K."/>
            <person name="James K.D."/>
            <person name="Jones L."/>
            <person name="Jones M."/>
            <person name="Leather S."/>
            <person name="McDonald S."/>
            <person name="McLean J."/>
            <person name="Mooney P."/>
            <person name="Moule S."/>
            <person name="Mungall K.L."/>
            <person name="Murphy L.D."/>
            <person name="Niblett D."/>
            <person name="Odell C."/>
            <person name="Oliver K."/>
            <person name="O'Neil S."/>
            <person name="Pearson D."/>
            <person name="Quail M.A."/>
            <person name="Rabbinowitsch E."/>
            <person name="Rutherford K.M."/>
            <person name="Rutter S."/>
            <person name="Saunders D."/>
            <person name="Seeger K."/>
            <person name="Sharp S."/>
            <person name="Skelton J."/>
            <person name="Simmonds M.N."/>
            <person name="Squares R."/>
            <person name="Squares S."/>
            <person name="Stevens K."/>
            <person name="Taylor K."/>
            <person name="Taylor R.G."/>
            <person name="Tivey A."/>
            <person name="Walsh S.V."/>
            <person name="Warren T."/>
            <person name="Whitehead S."/>
            <person name="Woodward J.R."/>
            <person name="Volckaert G."/>
            <person name="Aert R."/>
            <person name="Robben J."/>
            <person name="Grymonprez B."/>
            <person name="Weltjens I."/>
            <person name="Vanstreels E."/>
            <person name="Rieger M."/>
            <person name="Schaefer M."/>
            <person name="Mueller-Auer S."/>
            <person name="Gabel C."/>
            <person name="Fuchs M."/>
            <person name="Duesterhoeft A."/>
            <person name="Fritzc C."/>
            <person name="Holzer E."/>
            <person name="Moestl D."/>
            <person name="Hilbert H."/>
            <person name="Borzym K."/>
            <person name="Langer I."/>
            <person name="Beck A."/>
            <person name="Lehrach H."/>
            <person name="Reinhardt R."/>
            <person name="Pohl T.M."/>
            <person name="Eger P."/>
            <person name="Zimmermann W."/>
            <person name="Wedler H."/>
            <person name="Wambutt R."/>
            <person name="Purnelle B."/>
            <person name="Goffeau A."/>
            <person name="Cadieu E."/>
            <person name="Dreano S."/>
            <person name="Gloux S."/>
            <person name="Lelaure V."/>
            <person name="Mottier S."/>
            <person name="Galibert F."/>
            <person name="Aves S.J."/>
            <person name="Xiang Z."/>
            <person name="Hunt C."/>
            <person name="Moore K."/>
            <person name="Hurst S.M."/>
            <person name="Lucas M."/>
            <person name="Rochet M."/>
            <person name="Gaillardin C."/>
            <person name="Tallada V.A."/>
            <person name="Garzon A."/>
            <person name="Thode G."/>
            <person name="Daga R.R."/>
            <person name="Cruzado L."/>
            <person name="Jimenez J."/>
            <person name="Sanchez M."/>
            <person name="del Rey F."/>
            <person name="Benito J."/>
            <person name="Dominguez A."/>
            <person name="Revuelta J.L."/>
            <person name="Moreno S."/>
            <person name="Armstrong J."/>
            <person name="Forsburg S.L."/>
            <person name="Cerutti L."/>
            <person name="Lowe T."/>
            <person name="McCombie W.R."/>
            <person name="Paulsen I."/>
            <person name="Potashkin J."/>
            <person name="Shpakovski G.V."/>
            <person name="Ussery D."/>
            <person name="Barrell B.G."/>
            <person name="Nurse P."/>
        </authorList>
    </citation>
    <scope>NUCLEOTIDE SEQUENCE [LARGE SCALE GENOMIC DNA]</scope>
    <source>
        <strain>972 / ATCC 24843</strain>
    </source>
</reference>
<reference key="2">
    <citation type="journal article" date="2006" name="FEMS Yeast Res.">
        <title>The COX18 gene, involved in mitochondrial biogenesis, is functionally conserved and tightly regulated in humans and fission yeast.</title>
        <authorList>
            <person name="Gaisne M."/>
            <person name="Bonnefoy N."/>
        </authorList>
    </citation>
    <scope>IDENTIFICATION</scope>
    <scope>FUNCTION</scope>
</reference>
<name>COX18_SCHPO</name>
<keyword id="KW-0472">Membrane</keyword>
<keyword id="KW-0496">Mitochondrion</keyword>
<keyword id="KW-0999">Mitochondrion inner membrane</keyword>
<keyword id="KW-1185">Reference proteome</keyword>
<keyword id="KW-0809">Transit peptide</keyword>
<keyword id="KW-0812">Transmembrane</keyword>
<keyword id="KW-1133">Transmembrane helix</keyword>
<evidence type="ECO:0000250" key="1"/>
<evidence type="ECO:0000255" key="2"/>
<evidence type="ECO:0000269" key="3">
    <source>
    </source>
</evidence>
<evidence type="ECO:0000305" key="4"/>
<protein>
    <recommendedName>
        <fullName>Cytochrome c oxidase assembly protein cox18, mitochondrial</fullName>
    </recommendedName>
    <alternativeName>
        <fullName>Sp3</fullName>
    </alternativeName>
    <alternativeName>
        <fullName>cox18sp+</fullName>
    </alternativeName>
</protein>
<dbReference type="EMBL" id="CU329672">
    <property type="protein sequence ID" value="CAA21449.1"/>
    <property type="molecule type" value="Genomic_DNA"/>
</dbReference>
<dbReference type="PIR" id="T40980">
    <property type="entry name" value="T40980"/>
</dbReference>
<dbReference type="RefSeq" id="NP_588329.1">
    <property type="nucleotide sequence ID" value="NM_001023320.2"/>
</dbReference>
<dbReference type="SMR" id="O94587"/>
<dbReference type="BioGRID" id="275704">
    <property type="interactions" value="2"/>
</dbReference>
<dbReference type="FunCoup" id="O94587">
    <property type="interactions" value="47"/>
</dbReference>
<dbReference type="STRING" id="284812.O94587"/>
<dbReference type="TCDB" id="2.A.9.1.4">
    <property type="family name" value="the membrane protein insertase (yidc/alb3/oxa1) family"/>
</dbReference>
<dbReference type="PaxDb" id="4896-SPCC1442.15c.1"/>
<dbReference type="EnsemblFungi" id="SPCC1442.15c.1">
    <property type="protein sequence ID" value="SPCC1442.15c.1:pep"/>
    <property type="gene ID" value="SPCC1442.15c"/>
</dbReference>
<dbReference type="GeneID" id="2539132"/>
<dbReference type="KEGG" id="spo:2539132"/>
<dbReference type="PomBase" id="SPCC1442.15c">
    <property type="gene designation" value="cox18"/>
</dbReference>
<dbReference type="VEuPathDB" id="FungiDB:SPCC1442.15c"/>
<dbReference type="eggNOG" id="KOG1239">
    <property type="taxonomic scope" value="Eukaryota"/>
</dbReference>
<dbReference type="HOGENOM" id="CLU_029282_2_3_1"/>
<dbReference type="InParanoid" id="O94587"/>
<dbReference type="OMA" id="YWTTSAI"/>
<dbReference type="PhylomeDB" id="O94587"/>
<dbReference type="PRO" id="PR:O94587"/>
<dbReference type="Proteomes" id="UP000002485">
    <property type="component" value="Chromosome III"/>
</dbReference>
<dbReference type="GO" id="GO:0005743">
    <property type="term" value="C:mitochondrial inner membrane"/>
    <property type="evidence" value="ECO:0000316"/>
    <property type="project" value="PomBase"/>
</dbReference>
<dbReference type="GO" id="GO:0005739">
    <property type="term" value="C:mitochondrion"/>
    <property type="evidence" value="ECO:0007005"/>
    <property type="project" value="PomBase"/>
</dbReference>
<dbReference type="GO" id="GO:0032977">
    <property type="term" value="F:membrane insertase activity"/>
    <property type="evidence" value="ECO:0000316"/>
    <property type="project" value="PomBase"/>
</dbReference>
<dbReference type="GO" id="GO:0033617">
    <property type="term" value="P:mitochondrial cytochrome c oxidase assembly"/>
    <property type="evidence" value="ECO:0000315"/>
    <property type="project" value="PomBase"/>
</dbReference>
<dbReference type="GO" id="GO:0032979">
    <property type="term" value="P:protein insertion into mitochondrial inner membrane from matrix"/>
    <property type="evidence" value="ECO:0000316"/>
    <property type="project" value="PomBase"/>
</dbReference>
<dbReference type="GO" id="GO:0051204">
    <property type="term" value="P:protein insertion into mitochondrial membrane"/>
    <property type="evidence" value="ECO:0000316"/>
    <property type="project" value="UniProtKB"/>
</dbReference>
<dbReference type="GO" id="GO:0008535">
    <property type="term" value="P:respiratory chain complex IV assembly"/>
    <property type="evidence" value="ECO:0000316"/>
    <property type="project" value="UniProtKB"/>
</dbReference>
<dbReference type="CDD" id="cd20069">
    <property type="entry name" value="5TM_Oxa1-like"/>
    <property type="match status" value="1"/>
</dbReference>
<dbReference type="InterPro" id="IPR001708">
    <property type="entry name" value="YidC/ALB3/OXA1/COX18"/>
</dbReference>
<dbReference type="InterPro" id="IPR028055">
    <property type="entry name" value="YidC/Oxa/ALB_C"/>
</dbReference>
<dbReference type="PANTHER" id="PTHR12428:SF65">
    <property type="entry name" value="CYTOCHROME C OXIDASE ASSEMBLY PROTEIN COX18, MITOCHONDRIAL"/>
    <property type="match status" value="1"/>
</dbReference>
<dbReference type="PANTHER" id="PTHR12428">
    <property type="entry name" value="OXA1"/>
    <property type="match status" value="1"/>
</dbReference>
<dbReference type="Pfam" id="PF02096">
    <property type="entry name" value="60KD_IMP"/>
    <property type="match status" value="1"/>
</dbReference>
<accession>O94587</accession>
<gene>
    <name type="primary">cox18</name>
    <name type="synonym">oxa1-3</name>
    <name type="synonym">oxa103</name>
    <name type="ORF">SPCC1442.15c</name>
</gene>
<sequence length="202" mass="23011">MLQTLIGVHSYMPWCYEIPAMAIFLRSTITLPIAIASLKTARRFVQVQPLIKEAKKRCRTNTDFRTVRKKLYKRFNCHPLMIYALPITQLPLFAFASYQLRQAVDVCPESMSTEGMLWFTDLTLPDPHGVLPAVLAVTYLTNMSILKRPSDSRLLKIFNTAGIMSAFFVSFMAFKTSTALSLYWTTSAIYSLVQNVALRKLL</sequence>
<comment type="function">
    <text evidence="3">Required for the insertion of integral membrane proteins into the mitochondrial inner membrane. Essential for the activity and assembly of cytochrome c oxidase. Plays a central role in the translocation and export of the C-terminal part of the cox2 protein into the mitochondrial intermembrane space.</text>
</comment>
<comment type="subcellular location">
    <subcellularLocation>
        <location evidence="1">Mitochondrion inner membrane</location>
        <topology evidence="1">Multi-pass membrane protein</topology>
    </subcellularLocation>
</comment>
<comment type="similarity">
    <text evidence="4">Belongs to the OXA1/ALB3/YidC family.</text>
</comment>
<organism>
    <name type="scientific">Schizosaccharomyces pombe (strain 972 / ATCC 24843)</name>
    <name type="common">Fission yeast</name>
    <dbReference type="NCBI Taxonomy" id="284812"/>
    <lineage>
        <taxon>Eukaryota</taxon>
        <taxon>Fungi</taxon>
        <taxon>Dikarya</taxon>
        <taxon>Ascomycota</taxon>
        <taxon>Taphrinomycotina</taxon>
        <taxon>Schizosaccharomycetes</taxon>
        <taxon>Schizosaccharomycetales</taxon>
        <taxon>Schizosaccharomycetaceae</taxon>
        <taxon>Schizosaccharomyces</taxon>
    </lineage>
</organism>
<proteinExistence type="inferred from homology"/>
<feature type="transit peptide" description="Mitochondrion" evidence="2">
    <location>
        <begin position="1"/>
        <end status="unknown"/>
    </location>
</feature>
<feature type="chain" id="PRO_0000020360" description="Cytochrome c oxidase assembly protein cox18, mitochondrial">
    <location>
        <begin status="unknown"/>
        <end position="202"/>
    </location>
</feature>
<feature type="topological domain" description="Mitochondrial intermembrane" evidence="4">
    <location>
        <begin status="unknown"/>
        <end position="14"/>
    </location>
</feature>
<feature type="transmembrane region" description="Helical" evidence="2">
    <location>
        <begin position="15"/>
        <end position="35"/>
    </location>
</feature>
<feature type="topological domain" description="Mitochondrial matrix" evidence="4">
    <location>
        <begin position="36"/>
        <end position="74"/>
    </location>
</feature>
<feature type="transmembrane region" description="Helical" evidence="2">
    <location>
        <begin position="75"/>
        <end position="95"/>
    </location>
</feature>
<feature type="topological domain" description="Mitochondrial intermembrane" evidence="4">
    <location>
        <begin position="96"/>
        <end position="125"/>
    </location>
</feature>
<feature type="transmembrane region" description="Helical" evidence="2">
    <location>
        <begin position="126"/>
        <end position="146"/>
    </location>
</feature>
<feature type="topological domain" description="Mitochondrial matrix" evidence="4">
    <location>
        <begin position="147"/>
        <end position="168"/>
    </location>
</feature>
<feature type="transmembrane region" description="Helical" evidence="2">
    <location>
        <begin position="169"/>
        <end position="189"/>
    </location>
</feature>
<feature type="topological domain" description="Mitochondrial intermembrane" evidence="4">
    <location>
        <begin position="190"/>
        <end position="202"/>
    </location>
</feature>